<proteinExistence type="inferred from homology"/>
<protein>
    <recommendedName>
        <fullName evidence="1">Small ribosomal subunit protein bS6</fullName>
    </recommendedName>
    <alternativeName>
        <fullName evidence="2">30S ribosomal protein S6</fullName>
    </alternativeName>
</protein>
<name>RS6_ACTP2</name>
<feature type="chain" id="PRO_1000005207" description="Small ribosomal subunit protein bS6">
    <location>
        <begin position="1"/>
        <end position="124"/>
    </location>
</feature>
<accession>A3N1H3</accession>
<gene>
    <name evidence="1" type="primary">rpsF</name>
    <name type="ordered locus">APL_1171</name>
</gene>
<reference key="1">
    <citation type="journal article" date="2008" name="J. Bacteriol.">
        <title>The complete genome sequence of Actinobacillus pleuropneumoniae L20 (serotype 5b).</title>
        <authorList>
            <person name="Foote S.J."/>
            <person name="Bosse J.T."/>
            <person name="Bouevitch A.B."/>
            <person name="Langford P.R."/>
            <person name="Young N.M."/>
            <person name="Nash J.H.E."/>
        </authorList>
    </citation>
    <scope>NUCLEOTIDE SEQUENCE [LARGE SCALE GENOMIC DNA]</scope>
    <source>
        <strain>L20</strain>
    </source>
</reference>
<evidence type="ECO:0000255" key="1">
    <source>
        <dbReference type="HAMAP-Rule" id="MF_00360"/>
    </source>
</evidence>
<evidence type="ECO:0000305" key="2"/>
<keyword id="KW-1185">Reference proteome</keyword>
<keyword id="KW-0687">Ribonucleoprotein</keyword>
<keyword id="KW-0689">Ribosomal protein</keyword>
<keyword id="KW-0694">RNA-binding</keyword>
<keyword id="KW-0699">rRNA-binding</keyword>
<comment type="function">
    <text evidence="1">Binds together with bS18 to 16S ribosomal RNA.</text>
</comment>
<comment type="similarity">
    <text evidence="1">Belongs to the bacterial ribosomal protein bS6 family.</text>
</comment>
<organism>
    <name type="scientific">Actinobacillus pleuropneumoniae serotype 5b (strain L20)</name>
    <dbReference type="NCBI Taxonomy" id="416269"/>
    <lineage>
        <taxon>Bacteria</taxon>
        <taxon>Pseudomonadati</taxon>
        <taxon>Pseudomonadota</taxon>
        <taxon>Gammaproteobacteria</taxon>
        <taxon>Pasteurellales</taxon>
        <taxon>Pasteurellaceae</taxon>
        <taxon>Actinobacillus</taxon>
    </lineage>
</organism>
<sequence length="124" mass="14142">MRHYEIVFMVHPDQSEQVPAMIERYTASVKEAGGQVHRLEDWGRRQLAYPINKLHKAHYVLMNVEAPQRVIDELETNFRYNDAVLRNLIVHTKAAVTEASPMVKAKESKVAEAVAEVESEEAGE</sequence>
<dbReference type="EMBL" id="CP000569">
    <property type="protein sequence ID" value="ABN74259.1"/>
    <property type="molecule type" value="Genomic_DNA"/>
</dbReference>
<dbReference type="RefSeq" id="WP_011848538.1">
    <property type="nucleotide sequence ID" value="NC_009053.1"/>
</dbReference>
<dbReference type="SMR" id="A3N1H3"/>
<dbReference type="STRING" id="416269.APL_1171"/>
<dbReference type="EnsemblBacteria" id="ABN74259">
    <property type="protein sequence ID" value="ABN74259"/>
    <property type="gene ID" value="APL_1171"/>
</dbReference>
<dbReference type="KEGG" id="apl:APL_1171"/>
<dbReference type="PATRIC" id="fig|416269.6.peg.1222"/>
<dbReference type="eggNOG" id="COG0360">
    <property type="taxonomic scope" value="Bacteria"/>
</dbReference>
<dbReference type="HOGENOM" id="CLU_113441_6_1_6"/>
<dbReference type="Proteomes" id="UP000001432">
    <property type="component" value="Chromosome"/>
</dbReference>
<dbReference type="GO" id="GO:0022627">
    <property type="term" value="C:cytosolic small ribosomal subunit"/>
    <property type="evidence" value="ECO:0007669"/>
    <property type="project" value="TreeGrafter"/>
</dbReference>
<dbReference type="GO" id="GO:0070181">
    <property type="term" value="F:small ribosomal subunit rRNA binding"/>
    <property type="evidence" value="ECO:0007669"/>
    <property type="project" value="TreeGrafter"/>
</dbReference>
<dbReference type="GO" id="GO:0003735">
    <property type="term" value="F:structural constituent of ribosome"/>
    <property type="evidence" value="ECO:0007669"/>
    <property type="project" value="InterPro"/>
</dbReference>
<dbReference type="GO" id="GO:0006412">
    <property type="term" value="P:translation"/>
    <property type="evidence" value="ECO:0007669"/>
    <property type="project" value="UniProtKB-UniRule"/>
</dbReference>
<dbReference type="CDD" id="cd00473">
    <property type="entry name" value="bS6"/>
    <property type="match status" value="1"/>
</dbReference>
<dbReference type="FunFam" id="3.30.70.60:FF:000003">
    <property type="entry name" value="30S ribosomal protein S6"/>
    <property type="match status" value="1"/>
</dbReference>
<dbReference type="Gene3D" id="3.30.70.60">
    <property type="match status" value="1"/>
</dbReference>
<dbReference type="HAMAP" id="MF_00360">
    <property type="entry name" value="Ribosomal_bS6"/>
    <property type="match status" value="1"/>
</dbReference>
<dbReference type="InterPro" id="IPR000529">
    <property type="entry name" value="Ribosomal_bS6"/>
</dbReference>
<dbReference type="InterPro" id="IPR020815">
    <property type="entry name" value="Ribosomal_bS6_CS"/>
</dbReference>
<dbReference type="InterPro" id="IPR035980">
    <property type="entry name" value="Ribosomal_bS6_sf"/>
</dbReference>
<dbReference type="InterPro" id="IPR020814">
    <property type="entry name" value="Ribosomal_S6_plastid/chlpt"/>
</dbReference>
<dbReference type="InterPro" id="IPR014717">
    <property type="entry name" value="Transl_elong_EF1B/ribsomal_bS6"/>
</dbReference>
<dbReference type="NCBIfam" id="TIGR00166">
    <property type="entry name" value="S6"/>
    <property type="match status" value="1"/>
</dbReference>
<dbReference type="PANTHER" id="PTHR21011">
    <property type="entry name" value="MITOCHONDRIAL 28S RIBOSOMAL PROTEIN S6"/>
    <property type="match status" value="1"/>
</dbReference>
<dbReference type="PANTHER" id="PTHR21011:SF1">
    <property type="entry name" value="SMALL RIBOSOMAL SUBUNIT PROTEIN BS6M"/>
    <property type="match status" value="1"/>
</dbReference>
<dbReference type="Pfam" id="PF01250">
    <property type="entry name" value="Ribosomal_S6"/>
    <property type="match status" value="1"/>
</dbReference>
<dbReference type="SUPFAM" id="SSF54995">
    <property type="entry name" value="Ribosomal protein S6"/>
    <property type="match status" value="1"/>
</dbReference>
<dbReference type="PROSITE" id="PS01048">
    <property type="entry name" value="RIBOSOMAL_S6"/>
    <property type="match status" value="1"/>
</dbReference>